<organism>
    <name type="scientific">Pseudomonas fluorescens (strain SBW25)</name>
    <dbReference type="NCBI Taxonomy" id="216595"/>
    <lineage>
        <taxon>Bacteria</taxon>
        <taxon>Pseudomonadati</taxon>
        <taxon>Pseudomonadota</taxon>
        <taxon>Gammaproteobacteria</taxon>
        <taxon>Pseudomonadales</taxon>
        <taxon>Pseudomonadaceae</taxon>
        <taxon>Pseudomonas</taxon>
    </lineage>
</organism>
<accession>C3JYK1</accession>
<comment type="function">
    <text evidence="1">Involved in protein export. Acts as a chaperone by maintaining the newly synthesized protein in an open conformation. Functions as a peptidyl-prolyl cis-trans isomerase.</text>
</comment>
<comment type="catalytic activity">
    <reaction evidence="1">
        <text>[protein]-peptidylproline (omega=180) = [protein]-peptidylproline (omega=0)</text>
        <dbReference type="Rhea" id="RHEA:16237"/>
        <dbReference type="Rhea" id="RHEA-COMP:10747"/>
        <dbReference type="Rhea" id="RHEA-COMP:10748"/>
        <dbReference type="ChEBI" id="CHEBI:83833"/>
        <dbReference type="ChEBI" id="CHEBI:83834"/>
        <dbReference type="EC" id="5.2.1.8"/>
    </reaction>
</comment>
<comment type="subcellular location">
    <subcellularLocation>
        <location>Cytoplasm</location>
    </subcellularLocation>
    <text evidence="1">About half TF is bound to the ribosome near the polypeptide exit tunnel while the other half is free in the cytoplasm.</text>
</comment>
<comment type="domain">
    <text evidence="1">Consists of 3 domains; the N-terminus binds the ribosome, the middle domain has PPIase activity, while the C-terminus has intrinsic chaperone activity on its own.</text>
</comment>
<comment type="similarity">
    <text evidence="1">Belongs to the FKBP-type PPIase family. Tig subfamily.</text>
</comment>
<gene>
    <name evidence="1" type="primary">tig</name>
    <name type="ordered locus">PFLU_3930</name>
</gene>
<dbReference type="EC" id="5.2.1.8" evidence="1"/>
<dbReference type="EMBL" id="AM181176">
    <property type="protein sequence ID" value="CAY50312.1"/>
    <property type="molecule type" value="Genomic_DNA"/>
</dbReference>
<dbReference type="RefSeq" id="WP_015884724.1">
    <property type="nucleotide sequence ID" value="NC_012660.1"/>
</dbReference>
<dbReference type="SMR" id="C3JYK1"/>
<dbReference type="STRING" id="294.SRM1_03537"/>
<dbReference type="GeneID" id="93465278"/>
<dbReference type="eggNOG" id="COG0544">
    <property type="taxonomic scope" value="Bacteria"/>
</dbReference>
<dbReference type="HOGENOM" id="CLU_033058_2_0_6"/>
<dbReference type="OrthoDB" id="9767721at2"/>
<dbReference type="GO" id="GO:0005737">
    <property type="term" value="C:cytoplasm"/>
    <property type="evidence" value="ECO:0007669"/>
    <property type="project" value="UniProtKB-SubCell"/>
</dbReference>
<dbReference type="GO" id="GO:0003755">
    <property type="term" value="F:peptidyl-prolyl cis-trans isomerase activity"/>
    <property type="evidence" value="ECO:0007669"/>
    <property type="project" value="UniProtKB-UniRule"/>
</dbReference>
<dbReference type="GO" id="GO:0044183">
    <property type="term" value="F:protein folding chaperone"/>
    <property type="evidence" value="ECO:0007669"/>
    <property type="project" value="TreeGrafter"/>
</dbReference>
<dbReference type="GO" id="GO:0043022">
    <property type="term" value="F:ribosome binding"/>
    <property type="evidence" value="ECO:0007669"/>
    <property type="project" value="TreeGrafter"/>
</dbReference>
<dbReference type="GO" id="GO:0051083">
    <property type="term" value="P:'de novo' cotranslational protein folding"/>
    <property type="evidence" value="ECO:0007669"/>
    <property type="project" value="TreeGrafter"/>
</dbReference>
<dbReference type="GO" id="GO:0051301">
    <property type="term" value="P:cell division"/>
    <property type="evidence" value="ECO:0007669"/>
    <property type="project" value="UniProtKB-KW"/>
</dbReference>
<dbReference type="GO" id="GO:0061077">
    <property type="term" value="P:chaperone-mediated protein folding"/>
    <property type="evidence" value="ECO:0007669"/>
    <property type="project" value="TreeGrafter"/>
</dbReference>
<dbReference type="GO" id="GO:0015031">
    <property type="term" value="P:protein transport"/>
    <property type="evidence" value="ECO:0007669"/>
    <property type="project" value="UniProtKB-UniRule"/>
</dbReference>
<dbReference type="GO" id="GO:0043335">
    <property type="term" value="P:protein unfolding"/>
    <property type="evidence" value="ECO:0007669"/>
    <property type="project" value="TreeGrafter"/>
</dbReference>
<dbReference type="FunFam" id="3.10.50.40:FF:000001">
    <property type="entry name" value="Trigger factor"/>
    <property type="match status" value="1"/>
</dbReference>
<dbReference type="Gene3D" id="3.10.50.40">
    <property type="match status" value="1"/>
</dbReference>
<dbReference type="Gene3D" id="3.30.70.1050">
    <property type="entry name" value="Trigger factor ribosome-binding domain"/>
    <property type="match status" value="1"/>
</dbReference>
<dbReference type="Gene3D" id="1.10.3120.10">
    <property type="entry name" value="Trigger factor, C-terminal domain"/>
    <property type="match status" value="1"/>
</dbReference>
<dbReference type="HAMAP" id="MF_00303">
    <property type="entry name" value="Trigger_factor_Tig"/>
    <property type="match status" value="1"/>
</dbReference>
<dbReference type="InterPro" id="IPR046357">
    <property type="entry name" value="PPIase_dom_sf"/>
</dbReference>
<dbReference type="InterPro" id="IPR001179">
    <property type="entry name" value="PPIase_FKBP_dom"/>
</dbReference>
<dbReference type="InterPro" id="IPR005215">
    <property type="entry name" value="Trig_fac"/>
</dbReference>
<dbReference type="InterPro" id="IPR008880">
    <property type="entry name" value="Trigger_fac_C"/>
</dbReference>
<dbReference type="InterPro" id="IPR037041">
    <property type="entry name" value="Trigger_fac_C_sf"/>
</dbReference>
<dbReference type="InterPro" id="IPR008881">
    <property type="entry name" value="Trigger_fac_ribosome-bd_bac"/>
</dbReference>
<dbReference type="InterPro" id="IPR036611">
    <property type="entry name" value="Trigger_fac_ribosome-bd_sf"/>
</dbReference>
<dbReference type="InterPro" id="IPR027304">
    <property type="entry name" value="Trigger_fact/SurA_dom_sf"/>
</dbReference>
<dbReference type="NCBIfam" id="TIGR00115">
    <property type="entry name" value="tig"/>
    <property type="match status" value="1"/>
</dbReference>
<dbReference type="PANTHER" id="PTHR30560">
    <property type="entry name" value="TRIGGER FACTOR CHAPERONE AND PEPTIDYL-PROLYL CIS/TRANS ISOMERASE"/>
    <property type="match status" value="1"/>
</dbReference>
<dbReference type="PANTHER" id="PTHR30560:SF3">
    <property type="entry name" value="TRIGGER FACTOR-LIKE PROTEIN TIG, CHLOROPLASTIC"/>
    <property type="match status" value="1"/>
</dbReference>
<dbReference type="Pfam" id="PF00254">
    <property type="entry name" value="FKBP_C"/>
    <property type="match status" value="1"/>
</dbReference>
<dbReference type="Pfam" id="PF05698">
    <property type="entry name" value="Trigger_C"/>
    <property type="match status" value="1"/>
</dbReference>
<dbReference type="Pfam" id="PF05697">
    <property type="entry name" value="Trigger_N"/>
    <property type="match status" value="1"/>
</dbReference>
<dbReference type="PIRSF" id="PIRSF003095">
    <property type="entry name" value="Trigger_factor"/>
    <property type="match status" value="1"/>
</dbReference>
<dbReference type="SUPFAM" id="SSF54534">
    <property type="entry name" value="FKBP-like"/>
    <property type="match status" value="1"/>
</dbReference>
<dbReference type="SUPFAM" id="SSF109998">
    <property type="entry name" value="Triger factor/SurA peptide-binding domain-like"/>
    <property type="match status" value="1"/>
</dbReference>
<dbReference type="SUPFAM" id="SSF102735">
    <property type="entry name" value="Trigger factor ribosome-binding domain"/>
    <property type="match status" value="1"/>
</dbReference>
<dbReference type="PROSITE" id="PS50059">
    <property type="entry name" value="FKBP_PPIASE"/>
    <property type="match status" value="1"/>
</dbReference>
<name>TIG_PSEFS</name>
<feature type="chain" id="PRO_1000204996" description="Trigger factor">
    <location>
        <begin position="1"/>
        <end position="436"/>
    </location>
</feature>
<feature type="domain" description="PPIase FKBP-type" evidence="1">
    <location>
        <begin position="161"/>
        <end position="246"/>
    </location>
</feature>
<protein>
    <recommendedName>
        <fullName evidence="1">Trigger factor</fullName>
        <shortName evidence="1">TF</shortName>
        <ecNumber evidence="1">5.2.1.8</ecNumber>
    </recommendedName>
    <alternativeName>
        <fullName evidence="1">PPIase</fullName>
    </alternativeName>
</protein>
<sequence length="436" mass="48346">MQVSVENTTALERRLSITVPAERIETAVNKRLQQTAQKAKIAGFRPGKVPMSEIKRRFGADARQEAVGDVIQASFYEAVVEQKLNPAGSPSIEPKSLEAGKDLEYVAVFEVFPEFEVAGFDGIAIERLSAEVADSDLDNMLEILRKQNTRFEVAERAAQNEDQLNIDFVGKVDGEAFAGGSAKGTQLVLGSNRMIPGFEDGLVGAKAGEERVLNLEFPADYQNLDLAGKAAEFTVTVNSVSEPKLPELNEEFFAQFGIKETGIEGFRTEVRKNMERELRQAIKSKVKNQVMDGLLAANPIEVPKALLSNEVDRLRVQAVQQFGGNIKPDQLPAELFEEQAKRRVVLGLIVAEVVKQFDLKPDEDRVREMIQEMASAYQEPEQVVAWYYKNDQQLNEVRSVVLEEQVVDTVLQKAKVTDKAVSYEEAVKPAEAAQAD</sequence>
<reference key="1">
    <citation type="journal article" date="2009" name="Genome Biol.">
        <title>Genomic and genetic analyses of diversity and plant interactions of Pseudomonas fluorescens.</title>
        <authorList>
            <person name="Silby M.W."/>
            <person name="Cerdeno-Tarraga A.M."/>
            <person name="Vernikos G.S."/>
            <person name="Giddens S.R."/>
            <person name="Jackson R.W."/>
            <person name="Preston G.M."/>
            <person name="Zhang X.-X."/>
            <person name="Moon C.D."/>
            <person name="Gehrig S.M."/>
            <person name="Godfrey S.A.C."/>
            <person name="Knight C.G."/>
            <person name="Malone J.G."/>
            <person name="Robinson Z."/>
            <person name="Spiers A.J."/>
            <person name="Harris S."/>
            <person name="Challis G.L."/>
            <person name="Yaxley A.M."/>
            <person name="Harris D."/>
            <person name="Seeger K."/>
            <person name="Murphy L."/>
            <person name="Rutter S."/>
            <person name="Squares R."/>
            <person name="Quail M.A."/>
            <person name="Saunders E."/>
            <person name="Mavromatis K."/>
            <person name="Brettin T.S."/>
            <person name="Bentley S.D."/>
            <person name="Hothersall J."/>
            <person name="Stephens E."/>
            <person name="Thomas C.M."/>
            <person name="Parkhill J."/>
            <person name="Levy S.B."/>
            <person name="Rainey P.B."/>
            <person name="Thomson N.R."/>
        </authorList>
    </citation>
    <scope>NUCLEOTIDE SEQUENCE [LARGE SCALE GENOMIC DNA]</scope>
    <source>
        <strain>SBW25</strain>
    </source>
</reference>
<keyword id="KW-0131">Cell cycle</keyword>
<keyword id="KW-0132">Cell division</keyword>
<keyword id="KW-0143">Chaperone</keyword>
<keyword id="KW-0963">Cytoplasm</keyword>
<keyword id="KW-0413">Isomerase</keyword>
<keyword id="KW-0697">Rotamase</keyword>
<proteinExistence type="inferred from homology"/>
<evidence type="ECO:0000255" key="1">
    <source>
        <dbReference type="HAMAP-Rule" id="MF_00303"/>
    </source>
</evidence>